<comment type="function">
    <text evidence="1">Binds to 23S rRNA. Forms part of two intersubunit bridges in the 70S ribosome.</text>
</comment>
<comment type="subunit">
    <text evidence="1">Part of the 50S ribosomal subunit. Forms a cluster with proteins L3 and L19. In the 70S ribosome, L14 and L19 interact and together make contacts with the 16S rRNA in bridges B5 and B8.</text>
</comment>
<comment type="similarity">
    <text evidence="1">Belongs to the universal ribosomal protein uL14 family.</text>
</comment>
<feature type="chain" id="PRO_1000214968" description="Large ribosomal subunit protein uL14">
    <location>
        <begin position="1"/>
        <end position="122"/>
    </location>
</feature>
<dbReference type="EMBL" id="CP001618">
    <property type="protein sequence ID" value="ACQ81377.1"/>
    <property type="molecule type" value="Genomic_DNA"/>
</dbReference>
<dbReference type="RefSeq" id="WP_015883617.1">
    <property type="nucleotide sequence ID" value="NC_012669.1"/>
</dbReference>
<dbReference type="SMR" id="C5C0I1"/>
<dbReference type="STRING" id="471853.Bcav_3133"/>
<dbReference type="KEGG" id="bcv:Bcav_3133"/>
<dbReference type="eggNOG" id="COG0093">
    <property type="taxonomic scope" value="Bacteria"/>
</dbReference>
<dbReference type="HOGENOM" id="CLU_095071_2_1_11"/>
<dbReference type="OrthoDB" id="9806379at2"/>
<dbReference type="Proteomes" id="UP000007962">
    <property type="component" value="Chromosome"/>
</dbReference>
<dbReference type="GO" id="GO:0022625">
    <property type="term" value="C:cytosolic large ribosomal subunit"/>
    <property type="evidence" value="ECO:0007669"/>
    <property type="project" value="TreeGrafter"/>
</dbReference>
<dbReference type="GO" id="GO:0070180">
    <property type="term" value="F:large ribosomal subunit rRNA binding"/>
    <property type="evidence" value="ECO:0007669"/>
    <property type="project" value="TreeGrafter"/>
</dbReference>
<dbReference type="GO" id="GO:0003735">
    <property type="term" value="F:structural constituent of ribosome"/>
    <property type="evidence" value="ECO:0007669"/>
    <property type="project" value="InterPro"/>
</dbReference>
<dbReference type="GO" id="GO:0006412">
    <property type="term" value="P:translation"/>
    <property type="evidence" value="ECO:0007669"/>
    <property type="project" value="UniProtKB-UniRule"/>
</dbReference>
<dbReference type="CDD" id="cd00337">
    <property type="entry name" value="Ribosomal_uL14"/>
    <property type="match status" value="1"/>
</dbReference>
<dbReference type="FunFam" id="2.40.150.20:FF:000001">
    <property type="entry name" value="50S ribosomal protein L14"/>
    <property type="match status" value="1"/>
</dbReference>
<dbReference type="Gene3D" id="2.40.150.20">
    <property type="entry name" value="Ribosomal protein L14"/>
    <property type="match status" value="1"/>
</dbReference>
<dbReference type="HAMAP" id="MF_01367">
    <property type="entry name" value="Ribosomal_uL14"/>
    <property type="match status" value="1"/>
</dbReference>
<dbReference type="InterPro" id="IPR000218">
    <property type="entry name" value="Ribosomal_uL14"/>
</dbReference>
<dbReference type="InterPro" id="IPR005745">
    <property type="entry name" value="Ribosomal_uL14_bac-type"/>
</dbReference>
<dbReference type="InterPro" id="IPR019972">
    <property type="entry name" value="Ribosomal_uL14_CS"/>
</dbReference>
<dbReference type="InterPro" id="IPR036853">
    <property type="entry name" value="Ribosomal_uL14_sf"/>
</dbReference>
<dbReference type="NCBIfam" id="TIGR01067">
    <property type="entry name" value="rplN_bact"/>
    <property type="match status" value="1"/>
</dbReference>
<dbReference type="PANTHER" id="PTHR11761">
    <property type="entry name" value="50S/60S RIBOSOMAL PROTEIN L14/L23"/>
    <property type="match status" value="1"/>
</dbReference>
<dbReference type="PANTHER" id="PTHR11761:SF3">
    <property type="entry name" value="LARGE RIBOSOMAL SUBUNIT PROTEIN UL14M"/>
    <property type="match status" value="1"/>
</dbReference>
<dbReference type="Pfam" id="PF00238">
    <property type="entry name" value="Ribosomal_L14"/>
    <property type="match status" value="1"/>
</dbReference>
<dbReference type="SMART" id="SM01374">
    <property type="entry name" value="Ribosomal_L14"/>
    <property type="match status" value="1"/>
</dbReference>
<dbReference type="SUPFAM" id="SSF50193">
    <property type="entry name" value="Ribosomal protein L14"/>
    <property type="match status" value="1"/>
</dbReference>
<dbReference type="PROSITE" id="PS00049">
    <property type="entry name" value="RIBOSOMAL_L14"/>
    <property type="match status" value="1"/>
</dbReference>
<evidence type="ECO:0000255" key="1">
    <source>
        <dbReference type="HAMAP-Rule" id="MF_01367"/>
    </source>
</evidence>
<evidence type="ECO:0000305" key="2"/>
<keyword id="KW-1185">Reference proteome</keyword>
<keyword id="KW-0687">Ribonucleoprotein</keyword>
<keyword id="KW-0689">Ribosomal protein</keyword>
<keyword id="KW-0694">RNA-binding</keyword>
<keyword id="KW-0699">rRNA-binding</keyword>
<sequence>MIQQESRLKVADNTGAKEILCIRVLGGSGRRYAGIGDVIVATVKDAIPGGNVKRGDVVKAVVVRTAKERRRPDGSYIRFDENAAVLLKSDGEPRGTRIFGPVGRELRDKKFMRIVSLAPEVI</sequence>
<gene>
    <name evidence="1" type="primary">rplN</name>
    <name type="ordered locus">Bcav_3133</name>
</gene>
<name>RL14_BEUC1</name>
<protein>
    <recommendedName>
        <fullName evidence="1">Large ribosomal subunit protein uL14</fullName>
    </recommendedName>
    <alternativeName>
        <fullName evidence="2">50S ribosomal protein L14</fullName>
    </alternativeName>
</protein>
<accession>C5C0I1</accession>
<reference key="1">
    <citation type="journal article" date="2009" name="Stand. Genomic Sci.">
        <title>Complete genome sequence of Beutenbergia cavernae type strain (HKI 0122).</title>
        <authorList>
            <person name="Land M."/>
            <person name="Pukall R."/>
            <person name="Abt B."/>
            <person name="Goker M."/>
            <person name="Rohde M."/>
            <person name="Glavina Del Rio T."/>
            <person name="Tice H."/>
            <person name="Copeland A."/>
            <person name="Cheng J.F."/>
            <person name="Lucas S."/>
            <person name="Chen F."/>
            <person name="Nolan M."/>
            <person name="Bruce D."/>
            <person name="Goodwin L."/>
            <person name="Pitluck S."/>
            <person name="Ivanova N."/>
            <person name="Mavromatis K."/>
            <person name="Ovchinnikova G."/>
            <person name="Pati A."/>
            <person name="Chen A."/>
            <person name="Palaniappan K."/>
            <person name="Hauser L."/>
            <person name="Chang Y.J."/>
            <person name="Jefferies C.C."/>
            <person name="Saunders E."/>
            <person name="Brettin T."/>
            <person name="Detter J.C."/>
            <person name="Han C."/>
            <person name="Chain P."/>
            <person name="Bristow J."/>
            <person name="Eisen J.A."/>
            <person name="Markowitz V."/>
            <person name="Hugenholtz P."/>
            <person name="Kyrpides N.C."/>
            <person name="Klenk H.P."/>
            <person name="Lapidus A."/>
        </authorList>
    </citation>
    <scope>NUCLEOTIDE SEQUENCE [LARGE SCALE GENOMIC DNA]</scope>
    <source>
        <strain>ATCC BAA-8 / DSM 12333 / CCUG 43141 / JCM 11478 / NBRC 16432 / NCIMB 13614 / HKI 0122</strain>
    </source>
</reference>
<proteinExistence type="inferred from homology"/>
<organism>
    <name type="scientific">Beutenbergia cavernae (strain ATCC BAA-8 / DSM 12333 / CCUG 43141 / JCM 11478 / NBRC 16432 / NCIMB 13614 / HKI 0122)</name>
    <dbReference type="NCBI Taxonomy" id="471853"/>
    <lineage>
        <taxon>Bacteria</taxon>
        <taxon>Bacillati</taxon>
        <taxon>Actinomycetota</taxon>
        <taxon>Actinomycetes</taxon>
        <taxon>Micrococcales</taxon>
        <taxon>Beutenbergiaceae</taxon>
        <taxon>Beutenbergia</taxon>
    </lineage>
</organism>